<comment type="function">
    <text evidence="1">Presumably involved in the processing and regular turnover of intracellular proteins. Catalyzes the removal of unsubstituted N-terminal amino acids from various peptides.</text>
</comment>
<comment type="catalytic activity">
    <reaction evidence="1">
        <text>Release of an N-terminal amino acid, Xaa-|-Yaa-, in which Xaa is preferably Leu, but may be other amino acids including Pro although not Arg or Lys, and Yaa may be Pro. Amino acid amides and methyl esters are also readily hydrolyzed, but rates on arylamides are exceedingly low.</text>
        <dbReference type="EC" id="3.4.11.1"/>
    </reaction>
</comment>
<comment type="catalytic activity">
    <reaction evidence="1">
        <text>Release of an N-terminal amino acid, preferentially leucine, but not glutamic or aspartic acids.</text>
        <dbReference type="EC" id="3.4.11.10"/>
    </reaction>
</comment>
<comment type="cofactor">
    <cofactor evidence="1">
        <name>Mn(2+)</name>
        <dbReference type="ChEBI" id="CHEBI:29035"/>
    </cofactor>
    <text evidence="1">Binds 2 manganese ions per subunit.</text>
</comment>
<comment type="subcellular location">
    <subcellularLocation>
        <location evidence="1">Cytoplasm</location>
    </subcellularLocation>
</comment>
<comment type="similarity">
    <text evidence="1">Belongs to the peptidase M17 family.</text>
</comment>
<organism>
    <name type="scientific">Dechloromonas aromatica (strain RCB)</name>
    <dbReference type="NCBI Taxonomy" id="159087"/>
    <lineage>
        <taxon>Bacteria</taxon>
        <taxon>Pseudomonadati</taxon>
        <taxon>Pseudomonadota</taxon>
        <taxon>Betaproteobacteria</taxon>
        <taxon>Rhodocyclales</taxon>
        <taxon>Azonexaceae</taxon>
        <taxon>Dechloromonas</taxon>
    </lineage>
</organism>
<feature type="chain" id="PRO_1000019912" description="Probable cytosol aminopeptidase">
    <location>
        <begin position="1"/>
        <end position="498"/>
    </location>
</feature>
<feature type="active site" evidence="1">
    <location>
        <position position="279"/>
    </location>
</feature>
<feature type="active site" evidence="1">
    <location>
        <position position="353"/>
    </location>
</feature>
<feature type="binding site" evidence="1">
    <location>
        <position position="267"/>
    </location>
    <ligand>
        <name>Mn(2+)</name>
        <dbReference type="ChEBI" id="CHEBI:29035"/>
        <label>2</label>
    </ligand>
</feature>
<feature type="binding site" evidence="1">
    <location>
        <position position="272"/>
    </location>
    <ligand>
        <name>Mn(2+)</name>
        <dbReference type="ChEBI" id="CHEBI:29035"/>
        <label>1</label>
    </ligand>
</feature>
<feature type="binding site" evidence="1">
    <location>
        <position position="272"/>
    </location>
    <ligand>
        <name>Mn(2+)</name>
        <dbReference type="ChEBI" id="CHEBI:29035"/>
        <label>2</label>
    </ligand>
</feature>
<feature type="binding site" evidence="1">
    <location>
        <position position="290"/>
    </location>
    <ligand>
        <name>Mn(2+)</name>
        <dbReference type="ChEBI" id="CHEBI:29035"/>
        <label>2</label>
    </ligand>
</feature>
<feature type="binding site" evidence="1">
    <location>
        <position position="349"/>
    </location>
    <ligand>
        <name>Mn(2+)</name>
        <dbReference type="ChEBI" id="CHEBI:29035"/>
        <label>1</label>
    </ligand>
</feature>
<feature type="binding site" evidence="1">
    <location>
        <position position="351"/>
    </location>
    <ligand>
        <name>Mn(2+)</name>
        <dbReference type="ChEBI" id="CHEBI:29035"/>
        <label>1</label>
    </ligand>
</feature>
<feature type="binding site" evidence="1">
    <location>
        <position position="351"/>
    </location>
    <ligand>
        <name>Mn(2+)</name>
        <dbReference type="ChEBI" id="CHEBI:29035"/>
        <label>2</label>
    </ligand>
</feature>
<protein>
    <recommendedName>
        <fullName evidence="1">Probable cytosol aminopeptidase</fullName>
        <ecNumber evidence="1">3.4.11.1</ecNumber>
    </recommendedName>
    <alternativeName>
        <fullName evidence="1">Leucine aminopeptidase</fullName>
        <shortName evidence="1">LAP</shortName>
        <ecNumber evidence="1">3.4.11.10</ecNumber>
    </alternativeName>
    <alternativeName>
        <fullName evidence="1">Leucyl aminopeptidase</fullName>
    </alternativeName>
</protein>
<keyword id="KW-0031">Aminopeptidase</keyword>
<keyword id="KW-0963">Cytoplasm</keyword>
<keyword id="KW-0378">Hydrolase</keyword>
<keyword id="KW-0464">Manganese</keyword>
<keyword id="KW-0479">Metal-binding</keyword>
<keyword id="KW-0645">Protease</keyword>
<reference key="1">
    <citation type="journal article" date="2009" name="BMC Genomics">
        <title>Metabolic analysis of the soil microbe Dechloromonas aromatica str. RCB: indications of a surprisingly complex life-style and cryptic anaerobic pathways for aromatic degradation.</title>
        <authorList>
            <person name="Salinero K.K."/>
            <person name="Keller K."/>
            <person name="Feil W.S."/>
            <person name="Feil H."/>
            <person name="Trong S."/>
            <person name="Di Bartolo G."/>
            <person name="Lapidus A."/>
        </authorList>
    </citation>
    <scope>NUCLEOTIDE SEQUENCE [LARGE SCALE GENOMIC DNA]</scope>
    <source>
        <strain>RCB</strain>
    </source>
</reference>
<sequence length="498" mass="53875">MEFSIKSGSPEKQRSACVVVGVFESRKMTLPAELLDKASGGYISDIVRRGDMEGKAGSTLLLHSVPSTLCDRILLVGLGKEKDFREKEFASAIRTAVKVLNETGAFDASIFLTELPVRKRSIAWRVRQTAMIALDATYKFDQFKSKKEEIRRPLRKLTISVERRNELAPAEEALAQGLAIAEGMAMAKTLGNLPPNICHPTYLAEQAQAMAEEFKLGCEILDRAEMEKLGMHSLLSVARGSHQPPKLIVLTYKGARASEKPIVLVGKGVTFDTGGISLKPGAEMDEMKYDMCGAASVLGTMQAVARMALPINLTVVVPATENMPGGNATRPGDIVTSMSGQTIEILNTDAEGRLILCDALTYAERFEPDTVIDVATLTGACVVALGSIATGLFANKDALARDLLDAGEDANDRGWHMPLWDDYQELLKSPFADMANIGGRWGGAISAACFLSRFTKKFDWAHLDIAGTAWKSGADKGATGRPVPMLAYYLLQRAGKLN</sequence>
<accession>Q47BG9</accession>
<proteinExistence type="inferred from homology"/>
<dbReference type="EC" id="3.4.11.1" evidence="1"/>
<dbReference type="EC" id="3.4.11.10" evidence="1"/>
<dbReference type="EMBL" id="CP000089">
    <property type="protein sequence ID" value="AAZ47812.1"/>
    <property type="molecule type" value="Genomic_DNA"/>
</dbReference>
<dbReference type="SMR" id="Q47BG9"/>
<dbReference type="STRING" id="159087.Daro_3082"/>
<dbReference type="MEROPS" id="M17.003"/>
<dbReference type="KEGG" id="dar:Daro_3082"/>
<dbReference type="eggNOG" id="COG0260">
    <property type="taxonomic scope" value="Bacteria"/>
</dbReference>
<dbReference type="HOGENOM" id="CLU_013734_2_2_4"/>
<dbReference type="OrthoDB" id="9809354at2"/>
<dbReference type="GO" id="GO:0005737">
    <property type="term" value="C:cytoplasm"/>
    <property type="evidence" value="ECO:0007669"/>
    <property type="project" value="UniProtKB-SubCell"/>
</dbReference>
<dbReference type="GO" id="GO:0030145">
    <property type="term" value="F:manganese ion binding"/>
    <property type="evidence" value="ECO:0007669"/>
    <property type="project" value="UniProtKB-UniRule"/>
</dbReference>
<dbReference type="GO" id="GO:0070006">
    <property type="term" value="F:metalloaminopeptidase activity"/>
    <property type="evidence" value="ECO:0007669"/>
    <property type="project" value="InterPro"/>
</dbReference>
<dbReference type="GO" id="GO:0006508">
    <property type="term" value="P:proteolysis"/>
    <property type="evidence" value="ECO:0007669"/>
    <property type="project" value="UniProtKB-KW"/>
</dbReference>
<dbReference type="CDD" id="cd00433">
    <property type="entry name" value="Peptidase_M17"/>
    <property type="match status" value="1"/>
</dbReference>
<dbReference type="FunFam" id="3.40.630.10:FF:000004">
    <property type="entry name" value="Probable cytosol aminopeptidase"/>
    <property type="match status" value="1"/>
</dbReference>
<dbReference type="Gene3D" id="3.40.220.10">
    <property type="entry name" value="Leucine Aminopeptidase, subunit E, domain 1"/>
    <property type="match status" value="1"/>
</dbReference>
<dbReference type="Gene3D" id="3.40.630.10">
    <property type="entry name" value="Zn peptidases"/>
    <property type="match status" value="1"/>
</dbReference>
<dbReference type="HAMAP" id="MF_00181">
    <property type="entry name" value="Cytosol_peptidase_M17"/>
    <property type="match status" value="1"/>
</dbReference>
<dbReference type="InterPro" id="IPR011356">
    <property type="entry name" value="Leucine_aapep/pepB"/>
</dbReference>
<dbReference type="InterPro" id="IPR043472">
    <property type="entry name" value="Macro_dom-like"/>
</dbReference>
<dbReference type="InterPro" id="IPR000819">
    <property type="entry name" value="Peptidase_M17_C"/>
</dbReference>
<dbReference type="InterPro" id="IPR023042">
    <property type="entry name" value="Peptidase_M17_leu_NH2_pept"/>
</dbReference>
<dbReference type="InterPro" id="IPR008283">
    <property type="entry name" value="Peptidase_M17_N"/>
</dbReference>
<dbReference type="NCBIfam" id="NF002073">
    <property type="entry name" value="PRK00913.1-2"/>
    <property type="match status" value="1"/>
</dbReference>
<dbReference type="NCBIfam" id="NF002074">
    <property type="entry name" value="PRK00913.1-4"/>
    <property type="match status" value="1"/>
</dbReference>
<dbReference type="NCBIfam" id="NF002077">
    <property type="entry name" value="PRK00913.2-4"/>
    <property type="match status" value="1"/>
</dbReference>
<dbReference type="PANTHER" id="PTHR11963:SF23">
    <property type="entry name" value="CYTOSOL AMINOPEPTIDASE"/>
    <property type="match status" value="1"/>
</dbReference>
<dbReference type="PANTHER" id="PTHR11963">
    <property type="entry name" value="LEUCINE AMINOPEPTIDASE-RELATED"/>
    <property type="match status" value="1"/>
</dbReference>
<dbReference type="Pfam" id="PF00883">
    <property type="entry name" value="Peptidase_M17"/>
    <property type="match status" value="1"/>
</dbReference>
<dbReference type="Pfam" id="PF02789">
    <property type="entry name" value="Peptidase_M17_N"/>
    <property type="match status" value="1"/>
</dbReference>
<dbReference type="PRINTS" id="PR00481">
    <property type="entry name" value="LAMNOPPTDASE"/>
</dbReference>
<dbReference type="SUPFAM" id="SSF52949">
    <property type="entry name" value="Macro domain-like"/>
    <property type="match status" value="1"/>
</dbReference>
<dbReference type="SUPFAM" id="SSF53187">
    <property type="entry name" value="Zn-dependent exopeptidases"/>
    <property type="match status" value="1"/>
</dbReference>
<dbReference type="PROSITE" id="PS00631">
    <property type="entry name" value="CYTOSOL_AP"/>
    <property type="match status" value="1"/>
</dbReference>
<name>AMPA_DECAR</name>
<gene>
    <name evidence="1" type="primary">pepA</name>
    <name type="ordered locus">Daro_3082</name>
</gene>
<evidence type="ECO:0000255" key="1">
    <source>
        <dbReference type="HAMAP-Rule" id="MF_00181"/>
    </source>
</evidence>